<dbReference type="EMBL" id="AF512949">
    <property type="protein sequence ID" value="AAN03387.1"/>
    <property type="molecule type" value="mRNA"/>
</dbReference>
<dbReference type="EMBL" id="AF515053">
    <property type="protein sequence ID" value="AAN03411.1"/>
    <property type="molecule type" value="Genomic_DNA"/>
</dbReference>
<dbReference type="EMBL" id="AY143181">
    <property type="protein sequence ID" value="AAN60059.1"/>
    <property type="molecule type" value="mRNA"/>
</dbReference>
<dbReference type="EMBL" id="AY064614">
    <property type="protein sequence ID" value="AAL57734.1"/>
    <property type="molecule type" value="Genomic_DNA"/>
</dbReference>
<dbReference type="EMBL" id="AY064600">
    <property type="protein sequence ID" value="AAL57734.1"/>
    <property type="status" value="JOINED"/>
    <property type="molecule type" value="Genomic_DNA"/>
</dbReference>
<dbReference type="EMBL" id="AY064601">
    <property type="protein sequence ID" value="AAL57734.1"/>
    <property type="status" value="JOINED"/>
    <property type="molecule type" value="Genomic_DNA"/>
</dbReference>
<dbReference type="EMBL" id="AY064602">
    <property type="protein sequence ID" value="AAL57734.1"/>
    <property type="status" value="JOINED"/>
    <property type="molecule type" value="Genomic_DNA"/>
</dbReference>
<dbReference type="EMBL" id="AY064603">
    <property type="protein sequence ID" value="AAL57734.1"/>
    <property type="status" value="JOINED"/>
    <property type="molecule type" value="Genomic_DNA"/>
</dbReference>
<dbReference type="EMBL" id="AY064604">
    <property type="protein sequence ID" value="AAL57734.1"/>
    <property type="status" value="JOINED"/>
    <property type="molecule type" value="Genomic_DNA"/>
</dbReference>
<dbReference type="EMBL" id="AY064605">
    <property type="protein sequence ID" value="AAL57734.1"/>
    <property type="status" value="JOINED"/>
    <property type="molecule type" value="Genomic_DNA"/>
</dbReference>
<dbReference type="EMBL" id="AY064606">
    <property type="protein sequence ID" value="AAL57734.1"/>
    <property type="status" value="JOINED"/>
    <property type="molecule type" value="Genomic_DNA"/>
</dbReference>
<dbReference type="EMBL" id="AY064607">
    <property type="protein sequence ID" value="AAL57734.1"/>
    <property type="status" value="JOINED"/>
    <property type="molecule type" value="Genomic_DNA"/>
</dbReference>
<dbReference type="EMBL" id="AY064608">
    <property type="protein sequence ID" value="AAL57734.1"/>
    <property type="status" value="JOINED"/>
    <property type="molecule type" value="Genomic_DNA"/>
</dbReference>
<dbReference type="EMBL" id="AY064609">
    <property type="protein sequence ID" value="AAL57734.1"/>
    <property type="status" value="JOINED"/>
    <property type="molecule type" value="Genomic_DNA"/>
</dbReference>
<dbReference type="EMBL" id="AY064610">
    <property type="protein sequence ID" value="AAL57734.1"/>
    <property type="status" value="JOINED"/>
    <property type="molecule type" value="Genomic_DNA"/>
</dbReference>
<dbReference type="EMBL" id="AY064611">
    <property type="protein sequence ID" value="AAL57734.1"/>
    <property type="status" value="JOINED"/>
    <property type="molecule type" value="Genomic_DNA"/>
</dbReference>
<dbReference type="EMBL" id="AY064612">
    <property type="protein sequence ID" value="AAL57734.1"/>
    <property type="status" value="JOINED"/>
    <property type="molecule type" value="Genomic_DNA"/>
</dbReference>
<dbReference type="EMBL" id="AY064613">
    <property type="protein sequence ID" value="AAL57734.1"/>
    <property type="status" value="JOINED"/>
    <property type="molecule type" value="Genomic_DNA"/>
</dbReference>
<dbReference type="EMBL" id="DQ789573">
    <property type="protein sequence ID" value="ABL14215.2"/>
    <property type="molecule type" value="Genomic_DNA"/>
</dbReference>
<dbReference type="RefSeq" id="XP_054351476.1">
    <property type="nucleotide sequence ID" value="XM_054495501.2"/>
</dbReference>
<dbReference type="RefSeq" id="XP_063523842.1">
    <property type="nucleotide sequence ID" value="XM_063667772.1"/>
</dbReference>
<dbReference type="RefSeq" id="XP_063523843.1">
    <property type="nucleotide sequence ID" value="XM_063667773.1"/>
</dbReference>
<dbReference type="RefSeq" id="XP_063523844.1">
    <property type="nucleotide sequence ID" value="XM_063667774.1"/>
</dbReference>
<dbReference type="RefSeq" id="XP_063523845.1">
    <property type="nucleotide sequence ID" value="XM_063667775.1"/>
</dbReference>
<dbReference type="SMR" id="Q8MJ98"/>
<dbReference type="GeneID" id="129040711"/>
<dbReference type="GO" id="GO:0005634">
    <property type="term" value="C:nucleus"/>
    <property type="evidence" value="ECO:0007669"/>
    <property type="project" value="UniProtKB-SubCell"/>
</dbReference>
<dbReference type="GO" id="GO:0003677">
    <property type="term" value="F:DNA binding"/>
    <property type="evidence" value="ECO:0000250"/>
    <property type="project" value="UniProtKB"/>
</dbReference>
<dbReference type="GO" id="GO:0001227">
    <property type="term" value="F:DNA-binding transcription repressor activity, RNA polymerase II-specific"/>
    <property type="evidence" value="ECO:0007669"/>
    <property type="project" value="TreeGrafter"/>
</dbReference>
<dbReference type="GO" id="GO:0042803">
    <property type="term" value="F:protein homodimerization activity"/>
    <property type="evidence" value="ECO:0000250"/>
    <property type="project" value="UniProtKB"/>
</dbReference>
<dbReference type="GO" id="GO:0000978">
    <property type="term" value="F:RNA polymerase II cis-regulatory region sequence-specific DNA binding"/>
    <property type="evidence" value="ECO:0007669"/>
    <property type="project" value="TreeGrafter"/>
</dbReference>
<dbReference type="GO" id="GO:0008270">
    <property type="term" value="F:zinc ion binding"/>
    <property type="evidence" value="ECO:0007669"/>
    <property type="project" value="UniProtKB-KW"/>
</dbReference>
<dbReference type="GO" id="GO:0021757">
    <property type="term" value="P:caudate nucleus development"/>
    <property type="evidence" value="ECO:0000250"/>
    <property type="project" value="UniProtKB"/>
</dbReference>
<dbReference type="GO" id="GO:0021758">
    <property type="term" value="P:putamen development"/>
    <property type="evidence" value="ECO:0000250"/>
    <property type="project" value="UniProtKB"/>
</dbReference>
<dbReference type="CDD" id="cd20065">
    <property type="entry name" value="FH_FOXP2"/>
    <property type="match status" value="1"/>
</dbReference>
<dbReference type="FunFam" id="1.20.5.340:FF:000005">
    <property type="entry name" value="Forkhead box P1, isoform CRA_f"/>
    <property type="match status" value="1"/>
</dbReference>
<dbReference type="FunFam" id="1.10.10.10:FF:000010">
    <property type="entry name" value="Forkhead box P2 isoform B"/>
    <property type="match status" value="1"/>
</dbReference>
<dbReference type="Gene3D" id="1.20.5.340">
    <property type="match status" value="1"/>
</dbReference>
<dbReference type="Gene3D" id="1.10.10.10">
    <property type="entry name" value="Winged helix-like DNA-binding domain superfamily/Winged helix DNA-binding domain"/>
    <property type="match status" value="1"/>
</dbReference>
<dbReference type="InterPro" id="IPR047412">
    <property type="entry name" value="FH_FOXP1_P2"/>
</dbReference>
<dbReference type="InterPro" id="IPR001766">
    <property type="entry name" value="Fork_head_dom"/>
</dbReference>
<dbReference type="InterPro" id="IPR050998">
    <property type="entry name" value="FOXP"/>
</dbReference>
<dbReference type="InterPro" id="IPR032354">
    <property type="entry name" value="FOXP-CC"/>
</dbReference>
<dbReference type="InterPro" id="IPR030456">
    <property type="entry name" value="TF_fork_head_CS_2"/>
</dbReference>
<dbReference type="InterPro" id="IPR036388">
    <property type="entry name" value="WH-like_DNA-bd_sf"/>
</dbReference>
<dbReference type="InterPro" id="IPR036390">
    <property type="entry name" value="WH_DNA-bd_sf"/>
</dbReference>
<dbReference type="PANTHER" id="PTHR45796">
    <property type="entry name" value="FORKHEAD BOX P, ISOFORM C"/>
    <property type="match status" value="1"/>
</dbReference>
<dbReference type="PANTHER" id="PTHR45796:SF9">
    <property type="entry name" value="FORKHEAD BOX PROTEIN P2"/>
    <property type="match status" value="1"/>
</dbReference>
<dbReference type="Pfam" id="PF00250">
    <property type="entry name" value="Forkhead"/>
    <property type="match status" value="1"/>
</dbReference>
<dbReference type="Pfam" id="PF16159">
    <property type="entry name" value="FOXP-CC"/>
    <property type="match status" value="1"/>
</dbReference>
<dbReference type="PRINTS" id="PR00053">
    <property type="entry name" value="FORKHEAD"/>
</dbReference>
<dbReference type="SMART" id="SM00339">
    <property type="entry name" value="FH"/>
    <property type="match status" value="1"/>
</dbReference>
<dbReference type="SUPFAM" id="SSF46785">
    <property type="entry name" value="Winged helix' DNA-binding domain"/>
    <property type="match status" value="1"/>
</dbReference>
<dbReference type="PROSITE" id="PS00658">
    <property type="entry name" value="FORK_HEAD_2"/>
    <property type="match status" value="1"/>
</dbReference>
<dbReference type="PROSITE" id="PS50039">
    <property type="entry name" value="FORK_HEAD_3"/>
    <property type="match status" value="1"/>
</dbReference>
<dbReference type="PROSITE" id="PS00028">
    <property type="entry name" value="ZINC_FINGER_C2H2_1"/>
    <property type="match status" value="1"/>
</dbReference>
<comment type="function">
    <text evidence="1">Transcriptional repressor that may play a role in the specification and differentiation of lung epithelium. May also play a role in developing neural, gastrointestinal and cardiovascular tissues. Can act with CTBP1 to synergistically repress transcription but CTPBP1 is not essential. Plays a role in synapse formation by regulating SRPX2 levels (By similarity).</text>
</comment>
<comment type="subunit">
    <text evidence="2 3">Forms homodimers and heterodimers with FOXP1 and FOXP4. Dimerization is required for DNA-binding. Interacts with CTBP1 (By similarity). Interacts with FOXP1 (By similarity). Interacts with TBR1 (By similarity). Interacts with ZMYM2 (By similarity).</text>
</comment>
<comment type="subcellular location">
    <subcellularLocation>
        <location evidence="6">Nucleus</location>
    </subcellularLocation>
</comment>
<comment type="domain">
    <text evidence="1">The leucine-zipper is required for dimerization and transcriptional repression.</text>
</comment>
<proteinExistence type="evidence at transcript level"/>
<organism>
    <name type="scientific">Pongo pygmaeus</name>
    <name type="common">Bornean orangutan</name>
    <dbReference type="NCBI Taxonomy" id="9600"/>
    <lineage>
        <taxon>Eukaryota</taxon>
        <taxon>Metazoa</taxon>
        <taxon>Chordata</taxon>
        <taxon>Craniata</taxon>
        <taxon>Vertebrata</taxon>
        <taxon>Euteleostomi</taxon>
        <taxon>Mammalia</taxon>
        <taxon>Eutheria</taxon>
        <taxon>Euarchontoglires</taxon>
        <taxon>Primates</taxon>
        <taxon>Haplorrhini</taxon>
        <taxon>Catarrhini</taxon>
        <taxon>Hominidae</taxon>
        <taxon>Pongo</taxon>
    </lineage>
</organism>
<gene>
    <name type="primary">FOXP2</name>
</gene>
<name>FOXP2_PONPY</name>
<accession>Q8MJ98</accession>
<accession>A1BTK0</accession>
<accession>Q8HYZ9</accession>
<accession>Q8MJ84</accession>
<sequence>MMQESVTETISNSSMNQNGMSTLSSQLDAGSRDGRSSGDTSSEVSTVELLHLQQQQALQAARQLLLQQQTSGLKSPKSSDKQRPLQVPVSVAMMTPQVITPQQMQQILQQQVLSPQQLQALLQQQQAVMLQQQQLQEFYKKQQEQLHLQLLQQQQQQQQQQQQQQQQQQQQQQQQQQQQQQQQQQQQQQQHPGKQAKEQQQQQQQQQLAAQQLVFQQQLLQMQQLQQQQHLLSLQRQGLISIPPGQAALPVQSLPQAGLSPAEIQQLWKEVTGVHSMEDNGIKHGGLDLTTNNSSSTTSSTTSKASPPITHHSIVNGQSSVLNARRDSSSHEETGASHTLYGHGVCKWPGCESICEDFGQFLKHLNNEHALDDRSTAQCRVQMQVVQQLEIQLSKERERLQAMMTHLHMRPSEPKPSPKPLNLVSSVTMSKNMLETSPQSLPQTPTTPTAPVTPITQGPSVITPASVPNVGAIRRRHSDKYNIPMSSEIAPNYEFYKNADVRPPFTYATLIRQAIMESSDRQLTLNEIYSWFTRTFAYFRRNAATWKNAVRHNLSLHKCFVRVENVKGAVWTVDEVEYQKRRSQKITGSPTLVKNIPTSLGYGAALNASLQAALAESSLPLLSNPGLINNASSGLLQAVHEDLNGSLDHIDSNGNSSPGCSPQPHIHSIHVKEEPVIAEDEDCPMSLVTTANHSPELEDDREIEEEPLSEDLE</sequence>
<feature type="chain" id="PRO_0000091885" description="Forkhead box protein P2">
    <location>
        <begin position="1"/>
        <end position="713"/>
    </location>
</feature>
<feature type="zinc finger region" description="C2H2-type">
    <location>
        <begin position="344"/>
        <end position="369"/>
    </location>
</feature>
<feature type="DNA-binding region" description="Fork-head" evidence="4">
    <location>
        <begin position="502"/>
        <end position="592"/>
    </location>
</feature>
<feature type="region of interest" description="Disordered" evidence="5">
    <location>
        <begin position="1"/>
        <end position="44"/>
    </location>
</feature>
<feature type="region of interest" description="Disordered" evidence="5">
    <location>
        <begin position="279"/>
        <end position="337"/>
    </location>
</feature>
<feature type="region of interest" description="Leucine-zipper">
    <location>
        <begin position="386"/>
        <end position="407"/>
    </location>
</feature>
<feature type="region of interest" description="CTBP1-binding">
    <location>
        <begin position="420"/>
        <end position="424"/>
    </location>
</feature>
<feature type="region of interest" description="Disordered" evidence="5">
    <location>
        <begin position="436"/>
        <end position="463"/>
    </location>
</feature>
<feature type="region of interest" description="Disordered" evidence="5">
    <location>
        <begin position="647"/>
        <end position="666"/>
    </location>
</feature>
<feature type="region of interest" description="Disordered" evidence="5">
    <location>
        <begin position="676"/>
        <end position="713"/>
    </location>
</feature>
<feature type="compositionally biased region" description="Polar residues" evidence="5">
    <location>
        <begin position="1"/>
        <end position="28"/>
    </location>
</feature>
<feature type="compositionally biased region" description="Low complexity" evidence="5">
    <location>
        <begin position="290"/>
        <end position="303"/>
    </location>
</feature>
<feature type="compositionally biased region" description="Polar residues" evidence="5">
    <location>
        <begin position="313"/>
        <end position="322"/>
    </location>
</feature>
<feature type="compositionally biased region" description="Basic and acidic residues" evidence="5">
    <location>
        <begin position="324"/>
        <end position="335"/>
    </location>
</feature>
<feature type="compositionally biased region" description="Low complexity" evidence="5">
    <location>
        <begin position="436"/>
        <end position="457"/>
    </location>
</feature>
<feature type="compositionally biased region" description="Acidic residues" evidence="5">
    <location>
        <begin position="697"/>
        <end position="713"/>
    </location>
</feature>
<feature type="sequence conflict" description="In Ref. 2; AAN60059." evidence="6" ref="2">
    <original>Q</original>
    <variation>QQ</variation>
    <location>
        <position position="207"/>
    </location>
</feature>
<keyword id="KW-0238">DNA-binding</keyword>
<keyword id="KW-0479">Metal-binding</keyword>
<keyword id="KW-0539">Nucleus</keyword>
<keyword id="KW-0678">Repressor</keyword>
<keyword id="KW-0804">Transcription</keyword>
<keyword id="KW-0805">Transcription regulation</keyword>
<keyword id="KW-0862">Zinc</keyword>
<keyword id="KW-0863">Zinc-finger</keyword>
<evidence type="ECO:0000250" key="1"/>
<evidence type="ECO:0000250" key="2">
    <source>
        <dbReference type="UniProtKB" id="O15409"/>
    </source>
</evidence>
<evidence type="ECO:0000250" key="3">
    <source>
        <dbReference type="UniProtKB" id="P58463"/>
    </source>
</evidence>
<evidence type="ECO:0000255" key="4">
    <source>
        <dbReference type="PROSITE-ProRule" id="PRU00089"/>
    </source>
</evidence>
<evidence type="ECO:0000256" key="5">
    <source>
        <dbReference type="SAM" id="MobiDB-lite"/>
    </source>
</evidence>
<evidence type="ECO:0000305" key="6"/>
<reference key="1">
    <citation type="journal article" date="2002" name="Nature">
        <title>Molecular evolution of FOXP2, a gene involved in speech and language.</title>
        <authorList>
            <person name="Enard W."/>
            <person name="Przeworski M."/>
            <person name="Fisher S.E."/>
            <person name="Lai C.S.L."/>
            <person name="Wiebe V."/>
            <person name="Kitano T."/>
            <person name="Monaco A.P."/>
            <person name="Paeaebo S."/>
        </authorList>
    </citation>
    <scope>NUCLEOTIDE SEQUENCE [GENOMIC DNA / MRNA]</scope>
</reference>
<reference key="2">
    <citation type="journal article" date="2002" name="Genetics">
        <title>Accelerated protein evolution and origins of human-specific features: Foxp2 as an example.</title>
        <authorList>
            <person name="Zhang J."/>
            <person name="Webb D.M."/>
            <person name="Podlaha O."/>
        </authorList>
    </citation>
    <scope>NUCLEOTIDE SEQUENCE [MRNA]</scope>
</reference>
<reference key="3">
    <citation type="submission" date="2001-11" db="EMBL/GenBank/DDBJ databases">
        <title>The FOXP2 gene, implicated in language development, is conserved in mammalian evolution.</title>
        <authorList>
            <person name="Walter N.A.R."/>
            <person name="Thompson J."/>
            <person name="McGoldrick D.J."/>
            <person name="Messier W."/>
        </authorList>
    </citation>
    <scope>NUCLEOTIDE SEQUENCE [GENOMIC DNA]</scope>
    <source>
        <tissue>Blood</tissue>
    </source>
</reference>
<reference key="4">
    <citation type="submission" date="2006-12" db="EMBL/GenBank/DDBJ databases">
        <title>Sequence of FOXP2 gene in orangutan (Pongo pygmaeus).</title>
        <authorList>
            <person name="Swiszczorowska M."/>
            <person name="Lebioda A."/>
            <person name="Dobosz T."/>
        </authorList>
    </citation>
    <scope>NUCLEOTIDE SEQUENCE [GENOMIC DNA]</scope>
</reference>
<protein>
    <recommendedName>
        <fullName>Forkhead box protein P2</fullName>
    </recommendedName>
</protein>